<comment type="function">
    <text evidence="1">Fodrin, which seems to be involved in secretion, interacts with calmodulin in a calcium-dependent manner and is thus candidate for the calcium-dependent movement of the cytoskeleton at the membrane. Plays a critical role in central nervous system development and function.</text>
</comment>
<comment type="subunit">
    <text evidence="1 2 3">Interacts with ANK2 (By similarity). Interacts with CPNE4 (via VWFA domain). Like erythrocyte spectrin, the spectrin-like proteins are capable to form dimers which can further associate to tetramers. Associates with the gamma-tubulin complex in brain, but not in kidney, liver, sperm, or uterus (PubMed:20564227). Interacts with CAMSAP1. Can form heterodimers with SPTAN1.</text>
</comment>
<comment type="subcellular location">
    <subcellularLocation>
        <location evidence="2">Cytoplasm</location>
        <location evidence="2">Cytoskeleton</location>
    </subcellularLocation>
    <subcellularLocation>
        <location evidence="2">Cytoplasm</location>
        <location evidence="2">Myofibril</location>
        <location evidence="2">Sarcomere</location>
        <location evidence="2">M line</location>
    </subcellularLocation>
    <subcellularLocation>
        <location evidence="1">Cytoplasm</location>
        <location evidence="1">Cytosol</location>
    </subcellularLocation>
    <subcellularLocation>
        <location evidence="1">Cell membrane</location>
    </subcellularLocation>
    <text evidence="2">Colocalizes with ANK2 in a distinct intracellular compartment of neonatal cardiomyocytes.</text>
</comment>
<comment type="similarity">
    <text evidence="2">Belongs to the spectrin family.</text>
</comment>
<organism>
    <name type="scientific">Capra hircus</name>
    <name type="common">Goat</name>
    <dbReference type="NCBI Taxonomy" id="9925"/>
    <lineage>
        <taxon>Eukaryota</taxon>
        <taxon>Metazoa</taxon>
        <taxon>Chordata</taxon>
        <taxon>Craniata</taxon>
        <taxon>Vertebrata</taxon>
        <taxon>Euteleostomi</taxon>
        <taxon>Mammalia</taxon>
        <taxon>Eutheria</taxon>
        <taxon>Laurasiatheria</taxon>
        <taxon>Artiodactyla</taxon>
        <taxon>Ruminantia</taxon>
        <taxon>Pecora</taxon>
        <taxon>Bovidae</taxon>
        <taxon>Caprinae</taxon>
        <taxon>Capra</taxon>
    </lineage>
</organism>
<keyword id="KW-0117">Actin capping</keyword>
<keyword id="KW-0009">Actin-binding</keyword>
<keyword id="KW-0112">Calmodulin-binding</keyword>
<keyword id="KW-1003">Cell membrane</keyword>
<keyword id="KW-0963">Cytoplasm</keyword>
<keyword id="KW-0206">Cytoskeleton</keyword>
<keyword id="KW-0903">Direct protein sequencing</keyword>
<keyword id="KW-0472">Membrane</keyword>
<keyword id="KW-0597">Phosphoprotein</keyword>
<keyword id="KW-1185">Reference proteome</keyword>
<keyword id="KW-0677">Repeat</keyword>
<reference key="1">
    <citation type="journal article" date="2010" name="J. Cell. Biochem.">
        <title>Cytoplasmic gamma-tubulin complex from brain contains nonerythroid spectrin.</title>
        <authorList>
            <person name="Thomas N.E."/>
            <person name="Shashikala S."/>
            <person name="Sengupta S."/>
        </authorList>
    </citation>
    <scope>PROTEIN SEQUENCE</scope>
    <scope>SUBUNIT</scope>
    <source>
        <tissue>Brain</tissue>
    </source>
</reference>
<name>SPTB2_CAPHI</name>
<accession>P85986</accession>
<proteinExistence type="evidence at protein level"/>
<dbReference type="Proteomes" id="UP000291000">
    <property type="component" value="Unassembled WGS sequence"/>
</dbReference>
<dbReference type="Proteomes" id="UP000694566">
    <property type="component" value="Unplaced"/>
</dbReference>
<dbReference type="GO" id="GO:0005737">
    <property type="term" value="C:cytoplasm"/>
    <property type="evidence" value="ECO:0000250"/>
    <property type="project" value="UniProtKB"/>
</dbReference>
<dbReference type="GO" id="GO:0005856">
    <property type="term" value="C:cytoskeleton"/>
    <property type="evidence" value="ECO:0007669"/>
    <property type="project" value="UniProtKB-SubCell"/>
</dbReference>
<dbReference type="GO" id="GO:0005829">
    <property type="term" value="C:cytosol"/>
    <property type="evidence" value="ECO:0000250"/>
    <property type="project" value="UniProtKB"/>
</dbReference>
<dbReference type="GO" id="GO:0031430">
    <property type="term" value="C:M band"/>
    <property type="evidence" value="ECO:0007669"/>
    <property type="project" value="UniProtKB-SubCell"/>
</dbReference>
<dbReference type="GO" id="GO:0005730">
    <property type="term" value="C:nucleolus"/>
    <property type="evidence" value="ECO:0000250"/>
    <property type="project" value="UniProtKB"/>
</dbReference>
<dbReference type="GO" id="GO:0005886">
    <property type="term" value="C:plasma membrane"/>
    <property type="evidence" value="ECO:0000250"/>
    <property type="project" value="UniProtKB"/>
</dbReference>
<dbReference type="GO" id="GO:0003779">
    <property type="term" value="F:actin binding"/>
    <property type="evidence" value="ECO:0007669"/>
    <property type="project" value="UniProtKB-KW"/>
</dbReference>
<dbReference type="GO" id="GO:0005516">
    <property type="term" value="F:calmodulin binding"/>
    <property type="evidence" value="ECO:0007669"/>
    <property type="project" value="UniProtKB-KW"/>
</dbReference>
<dbReference type="GO" id="GO:0005200">
    <property type="term" value="F:structural constituent of cytoskeleton"/>
    <property type="evidence" value="ECO:0000250"/>
    <property type="project" value="UniProtKB"/>
</dbReference>
<dbReference type="GO" id="GO:0030036">
    <property type="term" value="P:actin cytoskeleton organization"/>
    <property type="evidence" value="ECO:0000250"/>
    <property type="project" value="UniProtKB"/>
</dbReference>
<dbReference type="GO" id="GO:0051693">
    <property type="term" value="P:actin filament capping"/>
    <property type="evidence" value="ECO:0007669"/>
    <property type="project" value="UniProtKB-KW"/>
</dbReference>
<dbReference type="GO" id="GO:0007417">
    <property type="term" value="P:central nervous system development"/>
    <property type="evidence" value="ECO:0000250"/>
    <property type="project" value="UniProtKB"/>
</dbReference>
<dbReference type="GO" id="GO:0021556">
    <property type="term" value="P:central nervous system formation"/>
    <property type="evidence" value="ECO:0000250"/>
    <property type="project" value="UniProtKB"/>
</dbReference>
<evidence type="ECO:0000250" key="1">
    <source>
        <dbReference type="UniProtKB" id="Q01082"/>
    </source>
</evidence>
<evidence type="ECO:0000250" key="2">
    <source>
        <dbReference type="UniProtKB" id="Q62261"/>
    </source>
</evidence>
<evidence type="ECO:0000269" key="3">
    <source>
    </source>
</evidence>
<evidence type="ECO:0000305" key="4"/>
<gene>
    <name type="primary">SPTBN1</name>
</gene>
<sequence length="31" mass="3581">VLLLSQDYGKYKEVAELTRTQILAASYELHK</sequence>
<protein>
    <recommendedName>
        <fullName>Spectrin beta chain, non-erythrocytic 1</fullName>
    </recommendedName>
</protein>
<feature type="chain" id="PRO_0000349156" description="Spectrin beta chain, non-erythrocytic 1">
    <location>
        <begin position="1" status="less than"/>
        <end position="31" status="greater than"/>
    </location>
</feature>
<feature type="repeat" description="Spectrin 3" evidence="2">
    <location>
        <begin position="1" status="less than"/>
        <end position="10" status="greater than"/>
    </location>
</feature>
<feature type="repeat" description="Spectrin 6" evidence="2">
    <location>
        <begin position="11" status="less than"/>
        <end position="19" status="greater than"/>
    </location>
</feature>
<feature type="repeat" description="Spectrin 15" evidence="2">
    <location>
        <begin position="20" status="less than"/>
        <end position="31" status="greater than"/>
    </location>
</feature>
<feature type="modified residue" description="Phosphotyrosine" evidence="2">
    <location>
        <position position="27"/>
    </location>
</feature>
<feature type="non-consecutive residues" evidence="4">
    <location>
        <begin position="10"/>
        <end position="11"/>
    </location>
</feature>
<feature type="non-consecutive residues" evidence="4">
    <location>
        <begin position="19"/>
        <end position="20"/>
    </location>
</feature>
<feature type="non-terminal residue">
    <location>
        <position position="1"/>
    </location>
</feature>
<feature type="non-terminal residue">
    <location>
        <position position="31"/>
    </location>
</feature>